<evidence type="ECO:0000255" key="1">
    <source>
        <dbReference type="HAMAP-Rule" id="MF_00627"/>
    </source>
</evidence>
<comment type="function">
    <text evidence="1">Catalyzes the NAD(+)-dependent oxidation of L-threonine to 2-amino-3-ketobutyrate.</text>
</comment>
<comment type="catalytic activity">
    <reaction evidence="1">
        <text>L-threonine + NAD(+) = (2S)-2-amino-3-oxobutanoate + NADH + H(+)</text>
        <dbReference type="Rhea" id="RHEA:13161"/>
        <dbReference type="ChEBI" id="CHEBI:15378"/>
        <dbReference type="ChEBI" id="CHEBI:57540"/>
        <dbReference type="ChEBI" id="CHEBI:57926"/>
        <dbReference type="ChEBI" id="CHEBI:57945"/>
        <dbReference type="ChEBI" id="CHEBI:78948"/>
        <dbReference type="EC" id="1.1.1.103"/>
    </reaction>
</comment>
<comment type="cofactor">
    <cofactor evidence="1">
        <name>Zn(2+)</name>
        <dbReference type="ChEBI" id="CHEBI:29105"/>
    </cofactor>
    <text evidence="1">Binds 2 Zn(2+) ions per subunit.</text>
</comment>
<comment type="pathway">
    <text evidence="1">Amino-acid degradation; L-threonine degradation via oxydo-reductase pathway; glycine from L-threonine: step 1/2.</text>
</comment>
<comment type="subunit">
    <text evidence="1">Homotetramer.</text>
</comment>
<comment type="subcellular location">
    <subcellularLocation>
        <location evidence="1">Cytoplasm</location>
    </subcellularLocation>
</comment>
<comment type="similarity">
    <text evidence="1">Belongs to the zinc-containing alcohol dehydrogenase family.</text>
</comment>
<accession>Q5E0F9</accession>
<gene>
    <name evidence="1" type="primary">tdh</name>
    <name type="ordered locus">VF_A0417</name>
</gene>
<keyword id="KW-0963">Cytoplasm</keyword>
<keyword id="KW-0479">Metal-binding</keyword>
<keyword id="KW-0520">NAD</keyword>
<keyword id="KW-0560">Oxidoreductase</keyword>
<keyword id="KW-1185">Reference proteome</keyword>
<keyword id="KW-0862">Zinc</keyword>
<dbReference type="EC" id="1.1.1.103" evidence="1"/>
<dbReference type="EMBL" id="CP000021">
    <property type="protein sequence ID" value="AAW87487.1"/>
    <property type="molecule type" value="Genomic_DNA"/>
</dbReference>
<dbReference type="RefSeq" id="WP_005422510.1">
    <property type="nucleotide sequence ID" value="NC_006841.2"/>
</dbReference>
<dbReference type="RefSeq" id="YP_206375.1">
    <property type="nucleotide sequence ID" value="NC_006841.2"/>
</dbReference>
<dbReference type="SMR" id="Q5E0F9"/>
<dbReference type="STRING" id="312309.VF_A0417"/>
<dbReference type="EnsemblBacteria" id="AAW87487">
    <property type="protein sequence ID" value="AAW87487"/>
    <property type="gene ID" value="VF_A0417"/>
</dbReference>
<dbReference type="GeneID" id="54165735"/>
<dbReference type="KEGG" id="vfi:VF_A0417"/>
<dbReference type="PATRIC" id="fig|312309.11.peg.3021"/>
<dbReference type="eggNOG" id="COG1063">
    <property type="taxonomic scope" value="Bacteria"/>
</dbReference>
<dbReference type="HOGENOM" id="CLU_026673_11_0_6"/>
<dbReference type="OrthoDB" id="9773078at2"/>
<dbReference type="UniPathway" id="UPA00046">
    <property type="reaction ID" value="UER00505"/>
</dbReference>
<dbReference type="Proteomes" id="UP000000537">
    <property type="component" value="Chromosome II"/>
</dbReference>
<dbReference type="GO" id="GO:0005737">
    <property type="term" value="C:cytoplasm"/>
    <property type="evidence" value="ECO:0007669"/>
    <property type="project" value="UniProtKB-SubCell"/>
</dbReference>
<dbReference type="GO" id="GO:0008743">
    <property type="term" value="F:L-threonine 3-dehydrogenase activity"/>
    <property type="evidence" value="ECO:0007669"/>
    <property type="project" value="UniProtKB-UniRule"/>
</dbReference>
<dbReference type="GO" id="GO:0008270">
    <property type="term" value="F:zinc ion binding"/>
    <property type="evidence" value="ECO:0007669"/>
    <property type="project" value="UniProtKB-UniRule"/>
</dbReference>
<dbReference type="GO" id="GO:0019518">
    <property type="term" value="P:L-threonine catabolic process to glycine"/>
    <property type="evidence" value="ECO:0007669"/>
    <property type="project" value="UniProtKB-UniPathway"/>
</dbReference>
<dbReference type="Gene3D" id="3.90.180.10">
    <property type="entry name" value="Medium-chain alcohol dehydrogenases, catalytic domain"/>
    <property type="match status" value="1"/>
</dbReference>
<dbReference type="Gene3D" id="3.40.50.720">
    <property type="entry name" value="NAD(P)-binding Rossmann-like Domain"/>
    <property type="match status" value="1"/>
</dbReference>
<dbReference type="HAMAP" id="MF_00627">
    <property type="entry name" value="Thr_dehydrog"/>
    <property type="match status" value="1"/>
</dbReference>
<dbReference type="InterPro" id="IPR013149">
    <property type="entry name" value="ADH-like_C"/>
</dbReference>
<dbReference type="InterPro" id="IPR013154">
    <property type="entry name" value="ADH-like_N"/>
</dbReference>
<dbReference type="InterPro" id="IPR002328">
    <property type="entry name" value="ADH_Zn_CS"/>
</dbReference>
<dbReference type="InterPro" id="IPR011032">
    <property type="entry name" value="GroES-like_sf"/>
</dbReference>
<dbReference type="InterPro" id="IPR004627">
    <property type="entry name" value="L-Threonine_3-DHase"/>
</dbReference>
<dbReference type="InterPro" id="IPR036291">
    <property type="entry name" value="NAD(P)-bd_dom_sf"/>
</dbReference>
<dbReference type="InterPro" id="IPR020843">
    <property type="entry name" value="PKS_ER"/>
</dbReference>
<dbReference type="InterPro" id="IPR050129">
    <property type="entry name" value="Zn_alcohol_dh"/>
</dbReference>
<dbReference type="NCBIfam" id="NF003808">
    <property type="entry name" value="PRK05396.1"/>
    <property type="match status" value="1"/>
</dbReference>
<dbReference type="NCBIfam" id="TIGR00692">
    <property type="entry name" value="tdh"/>
    <property type="match status" value="1"/>
</dbReference>
<dbReference type="PANTHER" id="PTHR43401">
    <property type="entry name" value="L-THREONINE 3-DEHYDROGENASE"/>
    <property type="match status" value="1"/>
</dbReference>
<dbReference type="PANTHER" id="PTHR43401:SF2">
    <property type="entry name" value="L-THREONINE 3-DEHYDROGENASE"/>
    <property type="match status" value="1"/>
</dbReference>
<dbReference type="Pfam" id="PF08240">
    <property type="entry name" value="ADH_N"/>
    <property type="match status" value="1"/>
</dbReference>
<dbReference type="Pfam" id="PF00107">
    <property type="entry name" value="ADH_zinc_N"/>
    <property type="match status" value="1"/>
</dbReference>
<dbReference type="SMART" id="SM00829">
    <property type="entry name" value="PKS_ER"/>
    <property type="match status" value="1"/>
</dbReference>
<dbReference type="SUPFAM" id="SSF50129">
    <property type="entry name" value="GroES-like"/>
    <property type="match status" value="1"/>
</dbReference>
<dbReference type="SUPFAM" id="SSF51735">
    <property type="entry name" value="NAD(P)-binding Rossmann-fold domains"/>
    <property type="match status" value="1"/>
</dbReference>
<dbReference type="PROSITE" id="PS00059">
    <property type="entry name" value="ADH_ZINC"/>
    <property type="match status" value="1"/>
</dbReference>
<protein>
    <recommendedName>
        <fullName evidence="1">L-threonine 3-dehydrogenase</fullName>
        <shortName evidence="1">TDH</shortName>
        <ecNumber evidence="1">1.1.1.103</ecNumber>
    </recommendedName>
</protein>
<organism>
    <name type="scientific">Aliivibrio fischeri (strain ATCC 700601 / ES114)</name>
    <name type="common">Vibrio fischeri</name>
    <dbReference type="NCBI Taxonomy" id="312309"/>
    <lineage>
        <taxon>Bacteria</taxon>
        <taxon>Pseudomonadati</taxon>
        <taxon>Pseudomonadota</taxon>
        <taxon>Gammaproteobacteria</taxon>
        <taxon>Vibrionales</taxon>
        <taxon>Vibrionaceae</taxon>
        <taxon>Aliivibrio</taxon>
    </lineage>
</organism>
<sequence>MKIKALSKLKPEEGIWLTEVEKPEMGHNDLLIRIKKTAICGTDVHIYNWDEWSQKTIPVPMVVGHEYVGEVVGIGQEVRGFEIGDRVSGEGHITCGHCRNCRGGRTHLCRNTTGVGVNRTGAFSEYLVIPAFNAFKIPAGISDDLASIFDPFGNAVHTALSFDLVGEDVLITGAGPIGIMAAAVAKHVGARHVVITDVNEYRLDLAKKMGVTRAVNVMNEKLEDVMSELGMTEGFDVGLEMSGNPSAFNSMLTNMNHGGKISLLGIPPSDMTVDWNQVIFKGLVIKGIYGREMFETWYKMASLIQSGLDLTPIITHHYKIDDFQAGFDMMRSGMSGKVILDWE</sequence>
<feature type="chain" id="PRO_0000160866" description="L-threonine 3-dehydrogenase">
    <location>
        <begin position="1"/>
        <end position="343"/>
    </location>
</feature>
<feature type="active site" description="Charge relay system" evidence="1">
    <location>
        <position position="42"/>
    </location>
</feature>
<feature type="active site" description="Charge relay system" evidence="1">
    <location>
        <position position="45"/>
    </location>
</feature>
<feature type="binding site" evidence="1">
    <location>
        <position position="40"/>
    </location>
    <ligand>
        <name>Zn(2+)</name>
        <dbReference type="ChEBI" id="CHEBI:29105"/>
        <label>1</label>
        <note>catalytic</note>
    </ligand>
</feature>
<feature type="binding site" evidence="1">
    <location>
        <position position="65"/>
    </location>
    <ligand>
        <name>Zn(2+)</name>
        <dbReference type="ChEBI" id="CHEBI:29105"/>
        <label>1</label>
        <note>catalytic</note>
    </ligand>
</feature>
<feature type="binding site" evidence="1">
    <location>
        <position position="66"/>
    </location>
    <ligand>
        <name>Zn(2+)</name>
        <dbReference type="ChEBI" id="CHEBI:29105"/>
        <label>1</label>
        <note>catalytic</note>
    </ligand>
</feature>
<feature type="binding site" evidence="1">
    <location>
        <position position="95"/>
    </location>
    <ligand>
        <name>Zn(2+)</name>
        <dbReference type="ChEBI" id="CHEBI:29105"/>
        <label>2</label>
    </ligand>
</feature>
<feature type="binding site" evidence="1">
    <location>
        <position position="98"/>
    </location>
    <ligand>
        <name>Zn(2+)</name>
        <dbReference type="ChEBI" id="CHEBI:29105"/>
        <label>2</label>
    </ligand>
</feature>
<feature type="binding site" evidence="1">
    <location>
        <position position="101"/>
    </location>
    <ligand>
        <name>Zn(2+)</name>
        <dbReference type="ChEBI" id="CHEBI:29105"/>
        <label>2</label>
    </ligand>
</feature>
<feature type="binding site" evidence="1">
    <location>
        <position position="109"/>
    </location>
    <ligand>
        <name>Zn(2+)</name>
        <dbReference type="ChEBI" id="CHEBI:29105"/>
        <label>2</label>
    </ligand>
</feature>
<feature type="binding site" evidence="1">
    <location>
        <position position="177"/>
    </location>
    <ligand>
        <name>NAD(+)</name>
        <dbReference type="ChEBI" id="CHEBI:57540"/>
    </ligand>
</feature>
<feature type="binding site" evidence="1">
    <location>
        <position position="197"/>
    </location>
    <ligand>
        <name>NAD(+)</name>
        <dbReference type="ChEBI" id="CHEBI:57540"/>
    </ligand>
</feature>
<feature type="binding site" evidence="1">
    <location>
        <position position="202"/>
    </location>
    <ligand>
        <name>NAD(+)</name>
        <dbReference type="ChEBI" id="CHEBI:57540"/>
    </ligand>
</feature>
<feature type="binding site" evidence="1">
    <location>
        <begin position="264"/>
        <end position="266"/>
    </location>
    <ligand>
        <name>NAD(+)</name>
        <dbReference type="ChEBI" id="CHEBI:57540"/>
    </ligand>
</feature>
<feature type="binding site" evidence="1">
    <location>
        <begin position="288"/>
        <end position="289"/>
    </location>
    <ligand>
        <name>NAD(+)</name>
        <dbReference type="ChEBI" id="CHEBI:57540"/>
    </ligand>
</feature>
<feature type="site" description="Important for catalytic activity for the proton relay mechanism but does not participate directly in the coordination of zinc atom" evidence="1">
    <location>
        <position position="150"/>
    </location>
</feature>
<reference key="1">
    <citation type="journal article" date="2005" name="Proc. Natl. Acad. Sci. U.S.A.">
        <title>Complete genome sequence of Vibrio fischeri: a symbiotic bacterium with pathogenic congeners.</title>
        <authorList>
            <person name="Ruby E.G."/>
            <person name="Urbanowski M."/>
            <person name="Campbell J."/>
            <person name="Dunn A."/>
            <person name="Faini M."/>
            <person name="Gunsalus R."/>
            <person name="Lostroh P."/>
            <person name="Lupp C."/>
            <person name="McCann J."/>
            <person name="Millikan D."/>
            <person name="Schaefer A."/>
            <person name="Stabb E."/>
            <person name="Stevens A."/>
            <person name="Visick K."/>
            <person name="Whistler C."/>
            <person name="Greenberg E.P."/>
        </authorList>
    </citation>
    <scope>NUCLEOTIDE SEQUENCE [LARGE SCALE GENOMIC DNA]</scope>
    <source>
        <strain>ATCC 700601 / ES114</strain>
    </source>
</reference>
<name>TDH_ALIF1</name>
<proteinExistence type="inferred from homology"/>